<reference key="1">
    <citation type="journal article" date="2004" name="Proc. Natl. Acad. Sci. U.S.A.">
        <title>The diploid genome sequence of Candida albicans.</title>
        <authorList>
            <person name="Jones T."/>
            <person name="Federspiel N.A."/>
            <person name="Chibana H."/>
            <person name="Dungan J."/>
            <person name="Kalman S."/>
            <person name="Magee B.B."/>
            <person name="Newport G."/>
            <person name="Thorstenson Y.R."/>
            <person name="Agabian N."/>
            <person name="Magee P.T."/>
            <person name="Davis R.W."/>
            <person name="Scherer S."/>
        </authorList>
    </citation>
    <scope>NUCLEOTIDE SEQUENCE [LARGE SCALE GENOMIC DNA]</scope>
    <source>
        <strain>SC5314 / ATCC MYA-2876</strain>
    </source>
</reference>
<reference key="2">
    <citation type="journal article" date="2007" name="Genome Biol.">
        <title>Assembly of the Candida albicans genome into sixteen supercontigs aligned on the eight chromosomes.</title>
        <authorList>
            <person name="van het Hoog M."/>
            <person name="Rast T.J."/>
            <person name="Martchenko M."/>
            <person name="Grindle S."/>
            <person name="Dignard D."/>
            <person name="Hogues H."/>
            <person name="Cuomo C."/>
            <person name="Berriman M."/>
            <person name="Scherer S."/>
            <person name="Magee B.B."/>
            <person name="Whiteway M."/>
            <person name="Chibana H."/>
            <person name="Nantel A."/>
            <person name="Magee P.T."/>
        </authorList>
    </citation>
    <scope>GENOME REANNOTATION</scope>
    <source>
        <strain>SC5314 / ATCC MYA-2876</strain>
    </source>
</reference>
<reference key="3">
    <citation type="journal article" date="2013" name="Genome Biol.">
        <title>Assembly of a phased diploid Candida albicans genome facilitates allele-specific measurements and provides a simple model for repeat and indel structure.</title>
        <authorList>
            <person name="Muzzey D."/>
            <person name="Schwartz K."/>
            <person name="Weissman J.S."/>
            <person name="Sherlock G."/>
        </authorList>
    </citation>
    <scope>NUCLEOTIDE SEQUENCE [LARGE SCALE GENOMIC DNA]</scope>
    <scope>GENOME REANNOTATION</scope>
    <source>
        <strain>SC5314 / ATCC MYA-2876</strain>
    </source>
</reference>
<gene>
    <name evidence="1" type="primary">THI4</name>
    <name type="ordered locus">CAALFM_C305130CA</name>
    <name type="ORF">CaO19.13407</name>
    <name type="ORF">CaO19.5986</name>
</gene>
<keyword id="KW-0963">Cytoplasm</keyword>
<keyword id="KW-0408">Iron</keyword>
<keyword id="KW-0479">Metal-binding</keyword>
<keyword id="KW-0520">NAD</keyword>
<keyword id="KW-0539">Nucleus</keyword>
<keyword id="KW-1185">Reference proteome</keyword>
<keyword id="KW-0784">Thiamine biosynthesis</keyword>
<keyword id="KW-0808">Transferase</keyword>
<proteinExistence type="inferred from homology"/>
<accession>Q5ANB7</accession>
<accession>A0A1D8PKC0</accession>
<comment type="function">
    <text evidence="1">Involved in biosynthesis of the thiamine precursor thiazole. Catalyzes the conversion of NAD and glycine to adenosine diphosphate 5-(2-hydroxyethyl)-4-methylthiazole-2-carboxylic acid (ADT), an adenylated thiazole intermediate. The reaction includes an iron-dependent sulfide transfer from a conserved cysteine residue of the protein to a thiazole intermediate. The enzyme can only undergo a single turnover, which suggests it is a suicide enzyme. May have additional roles in adaptation to various stress conditions and in DNA damage tolerance.</text>
</comment>
<comment type="catalytic activity">
    <reaction evidence="1">
        <text>[ADP-thiazole synthase]-L-cysteine + glycine + NAD(+) = [ADP-thiazole synthase]-dehydroalanine + ADP-5-ethyl-4-methylthiazole-2-carboxylate + nicotinamide + 3 H2O + 2 H(+)</text>
        <dbReference type="Rhea" id="RHEA:55708"/>
        <dbReference type="Rhea" id="RHEA-COMP:14264"/>
        <dbReference type="Rhea" id="RHEA-COMP:14265"/>
        <dbReference type="ChEBI" id="CHEBI:15377"/>
        <dbReference type="ChEBI" id="CHEBI:15378"/>
        <dbReference type="ChEBI" id="CHEBI:17154"/>
        <dbReference type="ChEBI" id="CHEBI:29950"/>
        <dbReference type="ChEBI" id="CHEBI:57305"/>
        <dbReference type="ChEBI" id="CHEBI:57540"/>
        <dbReference type="ChEBI" id="CHEBI:90873"/>
        <dbReference type="ChEBI" id="CHEBI:139151"/>
        <dbReference type="EC" id="2.4.2.60"/>
    </reaction>
</comment>
<comment type="cofactor">
    <cofactor evidence="1">
        <name>Fe cation</name>
        <dbReference type="ChEBI" id="CHEBI:24875"/>
    </cofactor>
    <text evidence="1">Binds 1 Fe cation per subunit.</text>
</comment>
<comment type="subunit">
    <text evidence="1">Homooctamer.</text>
</comment>
<comment type="subcellular location">
    <subcellularLocation>
        <location evidence="1">Cytoplasm</location>
    </subcellularLocation>
    <subcellularLocation>
        <location evidence="1">Nucleus</location>
    </subcellularLocation>
</comment>
<comment type="PTM">
    <text evidence="1">During the catalytic reaction, a sulfide is transferred from Cys-210 to a reaction intermediate, generating a dehydroalanine residue.</text>
</comment>
<comment type="similarity">
    <text evidence="1">Belongs to the THI4 family.</text>
</comment>
<evidence type="ECO:0000255" key="1">
    <source>
        <dbReference type="HAMAP-Rule" id="MF_03158"/>
    </source>
</evidence>
<feature type="chain" id="PRO_0000415871" description="Thiamine thiazole synthase">
    <location>
        <begin position="1"/>
        <end position="354"/>
    </location>
</feature>
<feature type="binding site" evidence="1">
    <location>
        <position position="83"/>
    </location>
    <ligand>
        <name>substrate</name>
    </ligand>
</feature>
<feature type="binding site" evidence="1">
    <location>
        <begin position="104"/>
        <end position="105"/>
    </location>
    <ligand>
        <name>substrate</name>
    </ligand>
</feature>
<feature type="binding site" evidence="1">
    <location>
        <position position="112"/>
    </location>
    <ligand>
        <name>substrate</name>
    </ligand>
</feature>
<feature type="binding site" evidence="1">
    <location>
        <position position="177"/>
    </location>
    <ligand>
        <name>substrate</name>
    </ligand>
</feature>
<feature type="binding site" evidence="1">
    <location>
        <position position="212"/>
    </location>
    <ligand>
        <name>substrate</name>
    </ligand>
</feature>
<feature type="binding site" evidence="1">
    <location>
        <position position="227"/>
    </location>
    <ligand>
        <name>substrate</name>
    </ligand>
</feature>
<feature type="binding site" evidence="1">
    <location>
        <position position="305"/>
    </location>
    <ligand>
        <name>substrate</name>
    </ligand>
</feature>
<feature type="binding site" evidence="1">
    <location>
        <begin position="315"/>
        <end position="317"/>
    </location>
    <ligand>
        <name>substrate</name>
    </ligand>
</feature>
<feature type="modified residue" description="2,3-didehydroalanine (Cys)" evidence="1">
    <location>
        <position position="210"/>
    </location>
</feature>
<name>THI4_CANAL</name>
<dbReference type="EC" id="2.4.2.60" evidence="1"/>
<dbReference type="EMBL" id="CP017625">
    <property type="protein sequence ID" value="AOW28528.1"/>
    <property type="molecule type" value="Genomic_DNA"/>
</dbReference>
<dbReference type="RefSeq" id="XP_723197.1">
    <property type="nucleotide sequence ID" value="XM_718104.1"/>
</dbReference>
<dbReference type="SMR" id="Q5ANB7"/>
<dbReference type="FunCoup" id="Q5ANB7">
    <property type="interactions" value="906"/>
</dbReference>
<dbReference type="STRING" id="237561.Q5ANB7"/>
<dbReference type="EnsemblFungi" id="C3_05130C_A-T">
    <property type="protein sequence ID" value="C3_05130C_A-T-p1"/>
    <property type="gene ID" value="C3_05130C_A"/>
</dbReference>
<dbReference type="GeneID" id="3635160"/>
<dbReference type="KEGG" id="cal:CAALFM_C305130CA"/>
<dbReference type="CGD" id="CAL0000199344">
    <property type="gene designation" value="THI4"/>
</dbReference>
<dbReference type="VEuPathDB" id="FungiDB:C3_05130C_A"/>
<dbReference type="eggNOG" id="KOG2960">
    <property type="taxonomic scope" value="Eukaryota"/>
</dbReference>
<dbReference type="HOGENOM" id="CLU_053727_0_0_1"/>
<dbReference type="InParanoid" id="Q5ANB7"/>
<dbReference type="OMA" id="MFPRIVV"/>
<dbReference type="OrthoDB" id="410463at2759"/>
<dbReference type="PRO" id="PR:Q5ANB7"/>
<dbReference type="Proteomes" id="UP000000559">
    <property type="component" value="Chromosome 3"/>
</dbReference>
<dbReference type="GO" id="GO:0005829">
    <property type="term" value="C:cytosol"/>
    <property type="evidence" value="ECO:0007669"/>
    <property type="project" value="UniProtKB-UniRule"/>
</dbReference>
<dbReference type="GO" id="GO:0062040">
    <property type="term" value="C:fungal biofilm matrix"/>
    <property type="evidence" value="ECO:0000314"/>
    <property type="project" value="CGD"/>
</dbReference>
<dbReference type="GO" id="GO:0005634">
    <property type="term" value="C:nucleus"/>
    <property type="evidence" value="ECO:0007669"/>
    <property type="project" value="UniProtKB-SubCell"/>
</dbReference>
<dbReference type="GO" id="GO:0160205">
    <property type="term" value="F:cysteine-dependent adenosine diphosphate thiazole synthase activity"/>
    <property type="evidence" value="ECO:0007669"/>
    <property type="project" value="UniProtKB-EC"/>
</dbReference>
<dbReference type="GO" id="GO:0005506">
    <property type="term" value="F:iron ion binding"/>
    <property type="evidence" value="ECO:0000318"/>
    <property type="project" value="GO_Central"/>
</dbReference>
<dbReference type="GO" id="GO:0009228">
    <property type="term" value="P:thiamine biosynthetic process"/>
    <property type="evidence" value="ECO:0007669"/>
    <property type="project" value="UniProtKB-UniRule"/>
</dbReference>
<dbReference type="GO" id="GO:0052837">
    <property type="term" value="P:thiazole biosynthetic process"/>
    <property type="evidence" value="ECO:0000318"/>
    <property type="project" value="GO_Central"/>
</dbReference>
<dbReference type="Gene3D" id="6.10.250.2840">
    <property type="match status" value="1"/>
</dbReference>
<dbReference type="Gene3D" id="3.50.50.60">
    <property type="entry name" value="FAD/NAD(P)-binding domain"/>
    <property type="match status" value="1"/>
</dbReference>
<dbReference type="HAMAP" id="MF_03158">
    <property type="entry name" value="THI4"/>
    <property type="match status" value="1"/>
</dbReference>
<dbReference type="InterPro" id="IPR036188">
    <property type="entry name" value="FAD/NAD-bd_sf"/>
</dbReference>
<dbReference type="InterPro" id="IPR027495">
    <property type="entry name" value="Sti35"/>
</dbReference>
<dbReference type="InterPro" id="IPR002922">
    <property type="entry name" value="Thi4_fam"/>
</dbReference>
<dbReference type="NCBIfam" id="TIGR00292">
    <property type="entry name" value="sulfide-dependent adenosine diphosphate thiazole synthase"/>
    <property type="match status" value="1"/>
</dbReference>
<dbReference type="PANTHER" id="PTHR43422">
    <property type="entry name" value="THIAMINE THIAZOLE SYNTHASE"/>
    <property type="match status" value="1"/>
</dbReference>
<dbReference type="PANTHER" id="PTHR43422:SF3">
    <property type="entry name" value="THIAMINE THIAZOLE SYNTHASE"/>
    <property type="match status" value="1"/>
</dbReference>
<dbReference type="Pfam" id="PF01946">
    <property type="entry name" value="Thi4"/>
    <property type="match status" value="2"/>
</dbReference>
<dbReference type="SUPFAM" id="SSF51905">
    <property type="entry name" value="FAD/NAD(P)-binding domain"/>
    <property type="match status" value="1"/>
</dbReference>
<sequence>MTPPTMLQTAPVESFNLNPKSTQQAINLKSDAKNGKVSFADWNEFKFAPIRESTVSRAMTRRYFADLDKFAESDIVIIGAGSAGLSAAYTLGKNRPDLKIAIIEASVSPGGGCWLGGQLFSAMVLRKPAHLFLDDMGLDYEDEGDYVVVKHAALFMSTLMSKVLQFPNIKLFNATAVEDLITRKDPATNLQRIAGVVVNWAQLDHDTQSCMDPNTINCNVVLSTSGHDGPFGAFTAKRLEQLGRAPRDVTAGFTKPSITTSKLQEPEPISNFQLGGMKGLDMNKAEDAIVKGTREVVPGLVIAGMELAEVDGSNRMGPTFGAMALSGVKAAESVLNVLELRKQQNEACYGAYKG</sequence>
<organism>
    <name type="scientific">Candida albicans (strain SC5314 / ATCC MYA-2876)</name>
    <name type="common">Yeast</name>
    <dbReference type="NCBI Taxonomy" id="237561"/>
    <lineage>
        <taxon>Eukaryota</taxon>
        <taxon>Fungi</taxon>
        <taxon>Dikarya</taxon>
        <taxon>Ascomycota</taxon>
        <taxon>Saccharomycotina</taxon>
        <taxon>Pichiomycetes</taxon>
        <taxon>Debaryomycetaceae</taxon>
        <taxon>Candida/Lodderomyces clade</taxon>
        <taxon>Candida</taxon>
    </lineage>
</organism>
<protein>
    <recommendedName>
        <fullName evidence="1">Thiamine thiazole synthase</fullName>
        <ecNumber evidence="1">2.4.2.60</ecNumber>
    </recommendedName>
    <alternativeName>
        <fullName evidence="1">Thiazole biosynthetic enzyme</fullName>
    </alternativeName>
</protein>